<proteinExistence type="evidence at protein level"/>
<keyword id="KW-0007">Acetylation</keyword>
<keyword id="KW-0903">Direct protein sequencing</keyword>
<keyword id="KW-1017">Isopeptide bond</keyword>
<keyword id="KW-0488">Methylation</keyword>
<keyword id="KW-0507">mRNA processing</keyword>
<keyword id="KW-0508">mRNA splicing</keyword>
<keyword id="KW-0539">Nucleus</keyword>
<keyword id="KW-0597">Phosphoprotein</keyword>
<keyword id="KW-1185">Reference proteome</keyword>
<keyword id="KW-0677">Repeat</keyword>
<keyword id="KW-0687">Ribonucleoprotein</keyword>
<keyword id="KW-0694">RNA-binding</keyword>
<keyword id="KW-0747">Spliceosome</keyword>
<keyword id="KW-0832">Ubl conjugation</keyword>
<name>HNRH1_MOUSE</name>
<organism>
    <name type="scientific">Mus musculus</name>
    <name type="common">Mouse</name>
    <dbReference type="NCBI Taxonomy" id="10090"/>
    <lineage>
        <taxon>Eukaryota</taxon>
        <taxon>Metazoa</taxon>
        <taxon>Chordata</taxon>
        <taxon>Craniata</taxon>
        <taxon>Vertebrata</taxon>
        <taxon>Euteleostomi</taxon>
        <taxon>Mammalia</taxon>
        <taxon>Eutheria</taxon>
        <taxon>Euarchontoglires</taxon>
        <taxon>Glires</taxon>
        <taxon>Rodentia</taxon>
        <taxon>Myomorpha</taxon>
        <taxon>Muroidea</taxon>
        <taxon>Muridae</taxon>
        <taxon>Murinae</taxon>
        <taxon>Mus</taxon>
        <taxon>Mus</taxon>
    </lineage>
</organism>
<accession>O35737</accession>
<evidence type="ECO:0000250" key="1"/>
<evidence type="ECO:0000250" key="2">
    <source>
        <dbReference type="UniProtKB" id="P31943"/>
    </source>
</evidence>
<evidence type="ECO:0000250" key="3">
    <source>
        <dbReference type="UniProtKB" id="P55795"/>
    </source>
</evidence>
<evidence type="ECO:0000255" key="4">
    <source>
        <dbReference type="PROSITE-ProRule" id="PRU00176"/>
    </source>
</evidence>
<evidence type="ECO:0007744" key="5">
    <source>
    </source>
</evidence>
<sequence length="449" mass="49199">MMLGAEGGEGFVVKVRGLPWSCSADEVQRFFSDCKIQNGAQGIRFIYTREGRPSGEAFVELESEDEVKLALKKDRETMGHRYVEVFKSNNVEMDWVLKHTGPNSPDTANDGFVRLRGLPFGCSKEEIVQFFSGLEIVPNGITLPVDFQGRSTGEAFVQFASQEIAEKALKKHKERIGHRYIEIFKSSRAEVRTHYDPPRKLMAMQRPGPYDRPGAGRGYNSIGRGAGFERMRRGAYGGGYGGYDDYNGYNDGYGFGSDRFGRDLNYCFSGMSDHRYGDGGSTFQSTTGHCVHMRGLPYRATENDIYNFFSPLNPVRVHIEIGPDGRVTGEADVEFATHEDAVAAMSKDKANMQHRYVELFLNSTAGASGGAYEHRYVELFLNSTAGASGGAYGSQMMGGMGLSNQSSYGGPASQQLSGGYGGGYGGQSSMSGYDQVLQENSSDFQSNIA</sequence>
<gene>
    <name type="primary">Hnrnph1</name>
    <name type="synonym">Hnrph</name>
    <name type="synonym">Hnrph1</name>
</gene>
<reference key="1">
    <citation type="submission" date="1997-07" db="EMBL/GenBank/DDBJ databases">
        <authorList>
            <person name="Wolff A."/>
            <person name="Landon F."/>
            <person name="Portier M.M."/>
        </authorList>
    </citation>
    <scope>NUCLEOTIDE SEQUENCE [MRNA]</scope>
    <source>
        <tissue>Neuroblastoma</tissue>
    </source>
</reference>
<reference key="2">
    <citation type="journal article" date="2004" name="Genome Res.">
        <title>The status, quality, and expansion of the NIH full-length cDNA project: the Mammalian Gene Collection (MGC).</title>
        <authorList>
            <consortium name="The MGC Project Team"/>
        </authorList>
    </citation>
    <scope>NUCLEOTIDE SEQUENCE [LARGE SCALE MRNA]</scope>
    <source>
        <strain>FVB/N-3</strain>
        <tissue>Mammary tumor</tissue>
    </source>
</reference>
<reference key="3">
    <citation type="submission" date="2007-07" db="UniProtKB">
        <authorList>
            <person name="Lubec G."/>
            <person name="Kang S.U."/>
            <person name="Klug S."/>
            <person name="Yang J.W."/>
            <person name="Zigmond M."/>
        </authorList>
    </citation>
    <scope>PROTEIN SEQUENCE OF 99-114 AND 300-326</scope>
    <scope>IDENTIFICATION BY MASS SPECTROMETRY</scope>
    <source>
        <strain>C57BL/6J</strain>
        <tissue>Brain</tissue>
        <tissue>Hippocampus</tissue>
    </source>
</reference>
<reference key="4">
    <citation type="journal article" date="2010" name="Cell">
        <title>A tissue-specific atlas of mouse protein phosphorylation and expression.</title>
        <authorList>
            <person name="Huttlin E.L."/>
            <person name="Jedrychowski M.P."/>
            <person name="Elias J.E."/>
            <person name="Goswami T."/>
            <person name="Rad R."/>
            <person name="Beausoleil S.A."/>
            <person name="Villen J."/>
            <person name="Haas W."/>
            <person name="Sowa M.E."/>
            <person name="Gygi S.P."/>
        </authorList>
    </citation>
    <scope>IDENTIFICATION BY MASS SPECTROMETRY [LARGE SCALE ANALYSIS]</scope>
    <source>
        <tissue>Brain</tissue>
        <tissue>Brown adipose tissue</tissue>
        <tissue>Heart</tissue>
        <tissue>Kidney</tissue>
        <tissue>Liver</tissue>
        <tissue>Lung</tissue>
        <tissue>Pancreas</tissue>
        <tissue>Spleen</tissue>
        <tissue>Testis</tissue>
    </source>
</reference>
<reference key="5">
    <citation type="journal article" date="2014" name="Mol. Cell. Proteomics">
        <title>Immunoaffinity enrichment and mass spectrometry analysis of protein methylation.</title>
        <authorList>
            <person name="Guo A."/>
            <person name="Gu H."/>
            <person name="Zhou J."/>
            <person name="Mulhern D."/>
            <person name="Wang Y."/>
            <person name="Lee K.A."/>
            <person name="Yang V."/>
            <person name="Aguiar M."/>
            <person name="Kornhauser J."/>
            <person name="Jia X."/>
            <person name="Ren J."/>
            <person name="Beausoleil S.A."/>
            <person name="Silva J.C."/>
            <person name="Vemulapalli V."/>
            <person name="Bedford M.T."/>
            <person name="Comb M.J."/>
        </authorList>
    </citation>
    <scope>METHYLATION [LARGE SCALE ANALYSIS] AT ARG-233</scope>
    <scope>IDENTIFICATION BY MASS SPECTROMETRY [LARGE SCALE ANALYSIS]</scope>
    <source>
        <tissue>Brain</tissue>
        <tissue>Embryo</tissue>
    </source>
</reference>
<comment type="function">
    <text evidence="1">This protein is a component of the heterogeneous nuclear ribonucleoprotein (hnRNP) complexes which provide the substrate for the processing events that pre-mRNAs undergo before becoming functional, translatable mRNAs in the cytoplasm. Mediates pre-mRNA alternative splicing regulation. Inhibits, together with CUGBP1, insulin receptor (IR) pre-mRNA exon 11 inclusion in myoblast. Binds to the IR RNA. Binds poly(RG) (By similarity).</text>
</comment>
<comment type="subunit">
    <text evidence="1">Part of a ternary complex containing FUBP2, PTBP1, PTBP2 and HNRNPH1. Identified in the spliceosome C complex. Interacts with IGF2BP1. Interacts with CUGBP1; the interaction is RNA-dependent. Interacts with MBNL1; the interaction in RNA-independent (By similarity).</text>
</comment>
<comment type="subcellular location">
    <subcellularLocation>
        <location evidence="1">Nucleus</location>
        <location evidence="1">Nucleoplasm</location>
    </subcellularLocation>
</comment>
<comment type="domain">
    <text>Each quasi-RRM repeat bound poly(RG), while only the N-terminal QRRM bound poly(RC) and poly(RU). None of the repeats bound detectable amounts of poly(RA).</text>
</comment>
<protein>
    <recommendedName>
        <fullName>Heterogeneous nuclear ribonucleoprotein H</fullName>
        <shortName>hnRNP H</shortName>
    </recommendedName>
    <component>
        <recommendedName>
            <fullName>Heterogeneous nuclear ribonucleoprotein H, N-terminally processed</fullName>
        </recommendedName>
    </component>
</protein>
<dbReference type="EMBL" id="Y14196">
    <property type="protein sequence ID" value="CAA74583.1"/>
    <property type="molecule type" value="mRNA"/>
</dbReference>
<dbReference type="EMBL" id="BC056224">
    <property type="protein sequence ID" value="AAH56224.1"/>
    <property type="molecule type" value="mRNA"/>
</dbReference>
<dbReference type="CCDS" id="CCDS24634.1"/>
<dbReference type="RefSeq" id="NP_001349452.1">
    <property type="nucleotide sequence ID" value="NM_001362523.1"/>
</dbReference>
<dbReference type="RefSeq" id="NP_001349453.1">
    <property type="nucleotide sequence ID" value="NM_001362524.1"/>
</dbReference>
<dbReference type="RefSeq" id="NP_001349454.1">
    <property type="nucleotide sequence ID" value="NM_001362525.1"/>
</dbReference>
<dbReference type="RefSeq" id="NP_001349455.1">
    <property type="nucleotide sequence ID" value="NM_001362526.1"/>
</dbReference>
<dbReference type="RefSeq" id="NP_067485.1">
    <property type="nucleotide sequence ID" value="NM_021510.3"/>
</dbReference>
<dbReference type="RefSeq" id="XP_017170179.1">
    <property type="nucleotide sequence ID" value="XM_017314690.1"/>
</dbReference>
<dbReference type="RefSeq" id="XP_017170180.1">
    <property type="nucleotide sequence ID" value="XM_017314691.1"/>
</dbReference>
<dbReference type="RefSeq" id="XP_036012772.1">
    <property type="nucleotide sequence ID" value="XM_036156879.1"/>
</dbReference>
<dbReference type="SMR" id="O35737"/>
<dbReference type="BioGRID" id="208484">
    <property type="interactions" value="89"/>
</dbReference>
<dbReference type="CORUM" id="O35737"/>
<dbReference type="FunCoup" id="O35737">
    <property type="interactions" value="3247"/>
</dbReference>
<dbReference type="IntAct" id="O35737">
    <property type="interactions" value="19"/>
</dbReference>
<dbReference type="MINT" id="O35737"/>
<dbReference type="STRING" id="10090.ENSMUSP00000076989"/>
<dbReference type="GlyGen" id="O35737">
    <property type="glycosylation" value="2 sites, 1 N-linked glycan (1 site), 1 O-linked glycan (1 site)"/>
</dbReference>
<dbReference type="iPTMnet" id="O35737"/>
<dbReference type="PhosphoSitePlus" id="O35737"/>
<dbReference type="SwissPalm" id="O35737"/>
<dbReference type="REPRODUCTION-2DPAGE" id="IPI00133916"/>
<dbReference type="REPRODUCTION-2DPAGE" id="O35737"/>
<dbReference type="jPOST" id="O35737"/>
<dbReference type="PaxDb" id="10090-ENSMUSP00000076989"/>
<dbReference type="PeptideAtlas" id="O35737"/>
<dbReference type="ProteomicsDB" id="273303"/>
<dbReference type="Pumba" id="O35737"/>
<dbReference type="Antibodypedia" id="17692">
    <property type="antibodies" value="317 antibodies from 29 providers"/>
</dbReference>
<dbReference type="DNASU" id="59013"/>
<dbReference type="Ensembl" id="ENSMUST00000069304.14">
    <property type="protein sequence ID" value="ENSMUSP00000070503.8"/>
    <property type="gene ID" value="ENSMUSG00000007850.17"/>
</dbReference>
<dbReference type="Ensembl" id="ENSMUST00000109142.8">
    <property type="protein sequence ID" value="ENSMUSP00000104770.2"/>
    <property type="gene ID" value="ENSMUSG00000007850.17"/>
</dbReference>
<dbReference type="GeneID" id="59013"/>
<dbReference type="KEGG" id="mmu:59013"/>
<dbReference type="UCSC" id="uc007isj.1">
    <property type="organism name" value="mouse"/>
</dbReference>
<dbReference type="AGR" id="MGI:1891925"/>
<dbReference type="CTD" id="3187"/>
<dbReference type="MGI" id="MGI:1891925">
    <property type="gene designation" value="Hnrnph1"/>
</dbReference>
<dbReference type="VEuPathDB" id="HostDB:ENSMUSG00000007850"/>
<dbReference type="eggNOG" id="KOG4211">
    <property type="taxonomic scope" value="Eukaryota"/>
</dbReference>
<dbReference type="GeneTree" id="ENSGT00940000153503"/>
<dbReference type="HOGENOM" id="CLU_032003_1_0_1"/>
<dbReference type="InParanoid" id="O35737"/>
<dbReference type="OMA" id="SKWDWRA"/>
<dbReference type="OrthoDB" id="431068at2759"/>
<dbReference type="Reactome" id="R-MMU-72163">
    <property type="pathway name" value="mRNA Splicing - Major Pathway"/>
</dbReference>
<dbReference type="Reactome" id="R-MMU-72203">
    <property type="pathway name" value="Processing of Capped Intron-Containing Pre-mRNA"/>
</dbReference>
<dbReference type="BioGRID-ORCS" id="59013">
    <property type="hits" value="8 hits in 81 CRISPR screens"/>
</dbReference>
<dbReference type="CD-CODE" id="DE1E139C">
    <property type="entry name" value="Chromatoid body"/>
</dbReference>
<dbReference type="ChiTaRS" id="Hnrnph1">
    <property type="organism name" value="mouse"/>
</dbReference>
<dbReference type="PRO" id="PR:O35737"/>
<dbReference type="Proteomes" id="UP000000589">
    <property type="component" value="Chromosome 11"/>
</dbReference>
<dbReference type="RNAct" id="O35737">
    <property type="molecule type" value="protein"/>
</dbReference>
<dbReference type="Bgee" id="ENSMUSG00000007850">
    <property type="expression patterns" value="Expressed in embryonic post-anal tail and 262 other cell types or tissues"/>
</dbReference>
<dbReference type="ExpressionAtlas" id="O35737">
    <property type="expression patterns" value="baseline and differential"/>
</dbReference>
<dbReference type="GO" id="GO:0005654">
    <property type="term" value="C:nucleoplasm"/>
    <property type="evidence" value="ECO:0007669"/>
    <property type="project" value="UniProtKB-SubCell"/>
</dbReference>
<dbReference type="GO" id="GO:0005634">
    <property type="term" value="C:nucleus"/>
    <property type="evidence" value="ECO:0000250"/>
    <property type="project" value="UniProtKB"/>
</dbReference>
<dbReference type="GO" id="GO:0005681">
    <property type="term" value="C:spliceosomal complex"/>
    <property type="evidence" value="ECO:0007669"/>
    <property type="project" value="UniProtKB-KW"/>
</dbReference>
<dbReference type="GO" id="GO:0003723">
    <property type="term" value="F:RNA binding"/>
    <property type="evidence" value="ECO:0000250"/>
    <property type="project" value="UniProtKB"/>
</dbReference>
<dbReference type="GO" id="GO:0098761">
    <property type="term" value="P:cellular response to interleukin-7"/>
    <property type="evidence" value="ECO:0000314"/>
    <property type="project" value="MGI"/>
</dbReference>
<dbReference type="GO" id="GO:0006397">
    <property type="term" value="P:mRNA processing"/>
    <property type="evidence" value="ECO:0007669"/>
    <property type="project" value="UniProtKB-KW"/>
</dbReference>
<dbReference type="GO" id="GO:0043484">
    <property type="term" value="P:regulation of RNA splicing"/>
    <property type="evidence" value="ECO:0000250"/>
    <property type="project" value="UniProtKB"/>
</dbReference>
<dbReference type="GO" id="GO:0008380">
    <property type="term" value="P:RNA splicing"/>
    <property type="evidence" value="ECO:0007669"/>
    <property type="project" value="UniProtKB-KW"/>
</dbReference>
<dbReference type="CDD" id="cd12729">
    <property type="entry name" value="RRM1_hnRNPH_hnRNPH2_hnRNPF"/>
    <property type="match status" value="1"/>
</dbReference>
<dbReference type="CDD" id="cd12731">
    <property type="entry name" value="RRM2_hnRNPH_hnRNPH2_hnRNPF"/>
    <property type="match status" value="1"/>
</dbReference>
<dbReference type="CDD" id="cd12734">
    <property type="entry name" value="RRM3_hnRNPH_hnRNPH2_hnRNPF"/>
    <property type="match status" value="1"/>
</dbReference>
<dbReference type="FunFam" id="3.30.70.330:FF:000071">
    <property type="entry name" value="heterogeneous nuclear ribonucleoprotein H isoform X1"/>
    <property type="match status" value="1"/>
</dbReference>
<dbReference type="FunFam" id="3.30.70.330:FF:000075">
    <property type="entry name" value="Heterogeneous nuclear ribonucleoprotein H1 (H)"/>
    <property type="match status" value="1"/>
</dbReference>
<dbReference type="FunFam" id="3.30.70.330:FF:000031">
    <property type="entry name" value="Heterogeneous nuclear ribonucleoprotein h3 isoform"/>
    <property type="match status" value="1"/>
</dbReference>
<dbReference type="Gene3D" id="3.30.70.330">
    <property type="match status" value="3"/>
</dbReference>
<dbReference type="InterPro" id="IPR050666">
    <property type="entry name" value="ESRP"/>
</dbReference>
<dbReference type="InterPro" id="IPR012677">
    <property type="entry name" value="Nucleotide-bd_a/b_plait_sf"/>
</dbReference>
<dbReference type="InterPro" id="IPR035979">
    <property type="entry name" value="RBD_domain_sf"/>
</dbReference>
<dbReference type="InterPro" id="IPR000504">
    <property type="entry name" value="RRM_dom"/>
</dbReference>
<dbReference type="InterPro" id="IPR012996">
    <property type="entry name" value="Znf_CHHC"/>
</dbReference>
<dbReference type="PANTHER" id="PTHR13976">
    <property type="entry name" value="HETEROGENEOUS NUCLEAR RIBONUCLEOPROTEIN-RELATED"/>
    <property type="match status" value="1"/>
</dbReference>
<dbReference type="Pfam" id="PF00076">
    <property type="entry name" value="RRM_1"/>
    <property type="match status" value="3"/>
</dbReference>
<dbReference type="Pfam" id="PF08080">
    <property type="entry name" value="zf-RNPHF"/>
    <property type="match status" value="1"/>
</dbReference>
<dbReference type="SMART" id="SM00360">
    <property type="entry name" value="RRM"/>
    <property type="match status" value="3"/>
</dbReference>
<dbReference type="SUPFAM" id="SSF54928">
    <property type="entry name" value="RNA-binding domain, RBD"/>
    <property type="match status" value="3"/>
</dbReference>
<dbReference type="PROSITE" id="PS50102">
    <property type="entry name" value="RRM"/>
    <property type="match status" value="3"/>
</dbReference>
<feature type="chain" id="PRO_0000081858" description="Heterogeneous nuclear ribonucleoprotein H">
    <location>
        <begin position="1"/>
        <end position="449"/>
    </location>
</feature>
<feature type="initiator methionine" description="Removed; alternate" evidence="2">
    <location>
        <position position="1"/>
    </location>
</feature>
<feature type="chain" id="PRO_0000367120" description="Heterogeneous nuclear ribonucleoprotein H, N-terminally processed">
    <location>
        <begin position="2"/>
        <end position="449"/>
    </location>
</feature>
<feature type="domain" description="RRM 1" evidence="4">
    <location>
        <begin position="11"/>
        <end position="90"/>
    </location>
</feature>
<feature type="domain" description="RRM 2" evidence="4">
    <location>
        <begin position="111"/>
        <end position="188"/>
    </location>
</feature>
<feature type="repeat" description="1-1">
    <location>
        <begin position="234"/>
        <end position="249"/>
    </location>
</feature>
<feature type="domain" description="RRM 3" evidence="4">
    <location>
        <begin position="289"/>
        <end position="364"/>
    </location>
</feature>
<feature type="repeat" description="2-1">
    <location>
        <begin position="354"/>
        <end position="372"/>
    </location>
</feature>
<feature type="repeat" description="2-2">
    <location>
        <begin position="374"/>
        <end position="392"/>
    </location>
</feature>
<feature type="repeat" description="1-2">
    <location>
        <begin position="418"/>
        <end position="433"/>
    </location>
</feature>
<feature type="region of interest" description="2 X 16 AA Gly-rich approximate repeats">
    <location>
        <begin position="234"/>
        <end position="433"/>
    </location>
</feature>
<feature type="region of interest" description="2 X 19 AA perfect repeats">
    <location>
        <begin position="354"/>
        <end position="392"/>
    </location>
</feature>
<feature type="modified residue" description="N-acetylmethionine" evidence="2">
    <location>
        <position position="1"/>
    </location>
</feature>
<feature type="modified residue" description="N-acetylmethionine; in Heterogeneous nuclear ribonucleoprotein H, N-terminally processed" evidence="2">
    <location>
        <position position="2"/>
    </location>
</feature>
<feature type="modified residue" description="Phosphoserine" evidence="2">
    <location>
        <position position="23"/>
    </location>
</feature>
<feature type="modified residue" description="Phosphoserine" evidence="2">
    <location>
        <position position="54"/>
    </location>
</feature>
<feature type="modified residue" description="Phosphoserine" evidence="2">
    <location>
        <position position="63"/>
    </location>
</feature>
<feature type="modified residue" description="Dimethylated arginine; alternate" evidence="2">
    <location>
        <position position="233"/>
    </location>
</feature>
<feature type="modified residue" description="Omega-N-methylarginine; alternate" evidence="5">
    <location>
        <position position="233"/>
    </location>
</feature>
<feature type="modified residue" description="Phosphotyrosine" evidence="2">
    <location>
        <position position="246"/>
    </location>
</feature>
<feature type="modified residue" description="Phosphoserine" evidence="3">
    <location>
        <position position="310"/>
    </location>
</feature>
<feature type="cross-link" description="Glycyl lysine isopeptide (Lys-Gly) (interchain with G-Cter in SUMO2)" evidence="2">
    <location>
        <position position="35"/>
    </location>
</feature>
<feature type="cross-link" description="Glycyl lysine isopeptide (Lys-Gly) (interchain with G-Cter in SUMO2)" evidence="2">
    <location>
        <position position="87"/>
    </location>
</feature>
<feature type="cross-link" description="Glycyl lysine isopeptide (Lys-Gly) (interchain with G-Cter in SUMO2)" evidence="2">
    <location>
        <position position="98"/>
    </location>
</feature>